<organism>
    <name type="scientific">Homo sapiens</name>
    <name type="common">Human</name>
    <dbReference type="NCBI Taxonomy" id="9606"/>
    <lineage>
        <taxon>Eukaryota</taxon>
        <taxon>Metazoa</taxon>
        <taxon>Chordata</taxon>
        <taxon>Craniata</taxon>
        <taxon>Vertebrata</taxon>
        <taxon>Euteleostomi</taxon>
        <taxon>Mammalia</taxon>
        <taxon>Eutheria</taxon>
        <taxon>Euarchontoglires</taxon>
        <taxon>Primates</taxon>
        <taxon>Haplorrhini</taxon>
        <taxon>Catarrhini</taxon>
        <taxon>Hominidae</taxon>
        <taxon>Homo</taxon>
    </lineage>
</organism>
<keyword id="KW-0025">Alternative splicing</keyword>
<keyword id="KW-0238">DNA-binding</keyword>
<keyword id="KW-0479">Metal-binding</keyword>
<keyword id="KW-0539">Nucleus</keyword>
<keyword id="KW-1267">Proteomics identification</keyword>
<keyword id="KW-1185">Reference proteome</keyword>
<keyword id="KW-0677">Repeat</keyword>
<keyword id="KW-0804">Transcription</keyword>
<keyword id="KW-0805">Transcription regulation</keyword>
<keyword id="KW-0862">Zinc</keyword>
<keyword id="KW-0863">Zinc-finger</keyword>
<feature type="chain" id="PRO_0000251196" description="Zinc finger protein 662">
    <location>
        <begin position="1"/>
        <end position="426"/>
    </location>
</feature>
<feature type="domain" description="KRAB" evidence="3">
    <location>
        <begin position="1"/>
        <end position="44"/>
    </location>
</feature>
<feature type="zinc finger region" description="C2H2-type 1" evidence="2">
    <location>
        <begin position="192"/>
        <end position="214"/>
    </location>
</feature>
<feature type="zinc finger region" description="C2H2-type 2" evidence="2">
    <location>
        <begin position="220"/>
        <end position="242"/>
    </location>
</feature>
<feature type="zinc finger region" description="C2H2-type 3" evidence="2">
    <location>
        <begin position="248"/>
        <end position="270"/>
    </location>
</feature>
<feature type="zinc finger region" description="C2H2-type 4" evidence="2">
    <location>
        <begin position="276"/>
        <end position="298"/>
    </location>
</feature>
<feature type="zinc finger region" description="C2H2-type 5" evidence="2">
    <location>
        <begin position="304"/>
        <end position="326"/>
    </location>
</feature>
<feature type="zinc finger region" description="C2H2-type 6" evidence="2">
    <location>
        <begin position="332"/>
        <end position="354"/>
    </location>
</feature>
<feature type="zinc finger region" description="C2H2-type 7" evidence="2">
    <location>
        <begin position="360"/>
        <end position="382"/>
    </location>
</feature>
<feature type="zinc finger region" description="C2H2-type 8" evidence="2">
    <location>
        <begin position="388"/>
        <end position="410"/>
    </location>
</feature>
<feature type="splice variant" id="VSP_053783" description="In isoform 3." evidence="5">
    <original>M</original>
    <variation>MAAVALASGTRLGLVLELLPGQPALPRARRESVTFEDVAVYFSENEWIGLGPAQRALYRDVM</variation>
    <location>
        <position position="1"/>
    </location>
</feature>
<feature type="splice variant" id="VSP_020745" description="In isoform 2." evidence="4">
    <location>
        <begin position="2"/>
        <end position="109"/>
    </location>
</feature>
<feature type="splice variant" id="VSP_053784" description="In isoform 3." evidence="5">
    <location>
        <position position="12"/>
    </location>
</feature>
<feature type="splice variant" id="VSP_053785" description="In isoform 3." evidence="5">
    <location>
        <begin position="51"/>
        <end position="84"/>
    </location>
</feature>
<feature type="sequence variant" id="VAR_061961" description="In dbSNP:rs60980399.">
    <original>N</original>
    <variation>S</variation>
    <location>
        <position position="176"/>
    </location>
</feature>
<feature type="sequence conflict" description="In Ref. 1; BAC87565." evidence="5" ref="1">
    <original>K</original>
    <variation>R</variation>
    <location>
        <position position="389"/>
    </location>
</feature>
<evidence type="ECO:0000250" key="1"/>
<evidence type="ECO:0000255" key="2">
    <source>
        <dbReference type="PROSITE-ProRule" id="PRU00042"/>
    </source>
</evidence>
<evidence type="ECO:0000255" key="3">
    <source>
        <dbReference type="PROSITE-ProRule" id="PRU00119"/>
    </source>
</evidence>
<evidence type="ECO:0000303" key="4">
    <source>
    </source>
</evidence>
<evidence type="ECO:0000305" key="5"/>
<comment type="function">
    <text evidence="1">May be involved in transcriptional regulation.</text>
</comment>
<comment type="interaction">
    <interactant intactId="EBI-10750665">
        <id>Q6ZS27</id>
    </interactant>
    <interactant intactId="EBI-1052479">
        <id>P16402</id>
        <label>H1-3</label>
    </interactant>
    <organismsDiffer>false</organismsDiffer>
    <experiments>2</experiments>
</comment>
<comment type="interaction">
    <interactant intactId="EBI-10255155">
        <id>Q6ZS27-3</id>
    </interactant>
    <interactant intactId="EBI-11962928">
        <id>Q9UI47-2</id>
        <label>CTNNA3</label>
    </interactant>
    <organismsDiffer>false</organismsDiffer>
    <experiments>3</experiments>
</comment>
<comment type="interaction">
    <interactant intactId="EBI-10255155">
        <id>Q6ZS27-3</id>
    </interactant>
    <interactant intactId="EBI-724076">
        <id>Q99750</id>
        <label>MDFI</label>
    </interactant>
    <organismsDiffer>false</organismsDiffer>
    <experiments>3</experiments>
</comment>
<comment type="interaction">
    <interactant intactId="EBI-10255155">
        <id>Q6ZS27-3</id>
    </interactant>
    <interactant intactId="EBI-928842">
        <id>Q9GZM8</id>
        <label>NDEL1</label>
    </interactant>
    <organismsDiffer>false</organismsDiffer>
    <experiments>3</experiments>
</comment>
<comment type="interaction">
    <interactant intactId="EBI-10255155">
        <id>Q6ZS27-3</id>
    </interactant>
    <interactant intactId="EBI-359224">
        <id>Q13077</id>
        <label>TRAF1</label>
    </interactant>
    <organismsDiffer>false</organismsDiffer>
    <experiments>3</experiments>
</comment>
<comment type="interaction">
    <interactant intactId="EBI-10255155">
        <id>Q6ZS27-3</id>
    </interactant>
    <interactant intactId="EBI-355744">
        <id>Q12933</id>
        <label>TRAF2</label>
    </interactant>
    <organismsDiffer>false</organismsDiffer>
    <experiments>3</experiments>
</comment>
<comment type="subcellular location">
    <subcellularLocation>
        <location evidence="1">Nucleus</location>
    </subcellularLocation>
</comment>
<comment type="alternative products">
    <event type="alternative splicing"/>
    <isoform>
        <id>Q6ZS27-1</id>
        <name>1</name>
        <sequence type="displayed"/>
    </isoform>
    <isoform>
        <id>Q6ZS27-2</id>
        <name>2</name>
        <sequence type="described" ref="VSP_020745"/>
    </isoform>
    <isoform>
        <id>Q6ZS27-3</id>
        <name>3</name>
        <sequence type="described" ref="VSP_053783 VSP_053784 VSP_053785"/>
    </isoform>
</comment>
<comment type="similarity">
    <text evidence="5">Belongs to the krueppel C2H2-type zinc-finger protein family.</text>
</comment>
<comment type="sequence caution" evidence="5">
    <conflict type="erroneous initiation">
        <sequence resource="EMBL-CDS" id="AAI28086"/>
    </conflict>
    <text>Truncated N-terminus.</text>
</comment>
<reference key="1">
    <citation type="journal article" date="2004" name="Nat. Genet.">
        <title>Complete sequencing and characterization of 21,243 full-length human cDNAs.</title>
        <authorList>
            <person name="Ota T."/>
            <person name="Suzuki Y."/>
            <person name="Nishikawa T."/>
            <person name="Otsuki T."/>
            <person name="Sugiyama T."/>
            <person name="Irie R."/>
            <person name="Wakamatsu A."/>
            <person name="Hayashi K."/>
            <person name="Sato H."/>
            <person name="Nagai K."/>
            <person name="Kimura K."/>
            <person name="Makita H."/>
            <person name="Sekine M."/>
            <person name="Obayashi M."/>
            <person name="Nishi T."/>
            <person name="Shibahara T."/>
            <person name="Tanaka T."/>
            <person name="Ishii S."/>
            <person name="Yamamoto J."/>
            <person name="Saito K."/>
            <person name="Kawai Y."/>
            <person name="Isono Y."/>
            <person name="Nakamura Y."/>
            <person name="Nagahari K."/>
            <person name="Murakami K."/>
            <person name="Yasuda T."/>
            <person name="Iwayanagi T."/>
            <person name="Wagatsuma M."/>
            <person name="Shiratori A."/>
            <person name="Sudo H."/>
            <person name="Hosoiri T."/>
            <person name="Kaku Y."/>
            <person name="Kodaira H."/>
            <person name="Kondo H."/>
            <person name="Sugawara M."/>
            <person name="Takahashi M."/>
            <person name="Kanda K."/>
            <person name="Yokoi T."/>
            <person name="Furuya T."/>
            <person name="Kikkawa E."/>
            <person name="Omura Y."/>
            <person name="Abe K."/>
            <person name="Kamihara K."/>
            <person name="Katsuta N."/>
            <person name="Sato K."/>
            <person name="Tanikawa M."/>
            <person name="Yamazaki M."/>
            <person name="Ninomiya K."/>
            <person name="Ishibashi T."/>
            <person name="Yamashita H."/>
            <person name="Murakawa K."/>
            <person name="Fujimori K."/>
            <person name="Tanai H."/>
            <person name="Kimata M."/>
            <person name="Watanabe M."/>
            <person name="Hiraoka S."/>
            <person name="Chiba Y."/>
            <person name="Ishida S."/>
            <person name="Ono Y."/>
            <person name="Takiguchi S."/>
            <person name="Watanabe S."/>
            <person name="Yosida M."/>
            <person name="Hotuta T."/>
            <person name="Kusano J."/>
            <person name="Kanehori K."/>
            <person name="Takahashi-Fujii A."/>
            <person name="Hara H."/>
            <person name="Tanase T.-O."/>
            <person name="Nomura Y."/>
            <person name="Togiya S."/>
            <person name="Komai F."/>
            <person name="Hara R."/>
            <person name="Takeuchi K."/>
            <person name="Arita M."/>
            <person name="Imose N."/>
            <person name="Musashino K."/>
            <person name="Yuuki H."/>
            <person name="Oshima A."/>
            <person name="Sasaki N."/>
            <person name="Aotsuka S."/>
            <person name="Yoshikawa Y."/>
            <person name="Matsunawa H."/>
            <person name="Ichihara T."/>
            <person name="Shiohata N."/>
            <person name="Sano S."/>
            <person name="Moriya S."/>
            <person name="Momiyama H."/>
            <person name="Satoh N."/>
            <person name="Takami S."/>
            <person name="Terashima Y."/>
            <person name="Suzuki O."/>
            <person name="Nakagawa S."/>
            <person name="Senoh A."/>
            <person name="Mizoguchi H."/>
            <person name="Goto Y."/>
            <person name="Shimizu F."/>
            <person name="Wakebe H."/>
            <person name="Hishigaki H."/>
            <person name="Watanabe T."/>
            <person name="Sugiyama A."/>
            <person name="Takemoto M."/>
            <person name="Kawakami B."/>
            <person name="Yamazaki M."/>
            <person name="Watanabe K."/>
            <person name="Kumagai A."/>
            <person name="Itakura S."/>
            <person name="Fukuzumi Y."/>
            <person name="Fujimori Y."/>
            <person name="Komiyama M."/>
            <person name="Tashiro H."/>
            <person name="Tanigami A."/>
            <person name="Fujiwara T."/>
            <person name="Ono T."/>
            <person name="Yamada K."/>
            <person name="Fujii Y."/>
            <person name="Ozaki K."/>
            <person name="Hirao M."/>
            <person name="Ohmori Y."/>
            <person name="Kawabata A."/>
            <person name="Hikiji T."/>
            <person name="Kobatake N."/>
            <person name="Inagaki H."/>
            <person name="Ikema Y."/>
            <person name="Okamoto S."/>
            <person name="Okitani R."/>
            <person name="Kawakami T."/>
            <person name="Noguchi S."/>
            <person name="Itoh T."/>
            <person name="Shigeta K."/>
            <person name="Senba T."/>
            <person name="Matsumura K."/>
            <person name="Nakajima Y."/>
            <person name="Mizuno T."/>
            <person name="Morinaga M."/>
            <person name="Sasaki M."/>
            <person name="Togashi T."/>
            <person name="Oyama M."/>
            <person name="Hata H."/>
            <person name="Watanabe M."/>
            <person name="Komatsu T."/>
            <person name="Mizushima-Sugano J."/>
            <person name="Satoh T."/>
            <person name="Shirai Y."/>
            <person name="Takahashi Y."/>
            <person name="Nakagawa K."/>
            <person name="Okumura K."/>
            <person name="Nagase T."/>
            <person name="Nomura N."/>
            <person name="Kikuchi H."/>
            <person name="Masuho Y."/>
            <person name="Yamashita R."/>
            <person name="Nakai K."/>
            <person name="Yada T."/>
            <person name="Nakamura Y."/>
            <person name="Ohara O."/>
            <person name="Isogai T."/>
            <person name="Sugano S."/>
        </authorList>
    </citation>
    <scope>NUCLEOTIDE SEQUENCE [LARGE SCALE MRNA] (ISOFORMS 1 AND 2)</scope>
    <source>
        <tissue>Amygdala</tissue>
        <tissue>Brain</tissue>
        <tissue>Uterus</tissue>
    </source>
</reference>
<reference key="2">
    <citation type="journal article" date="2006" name="Nature">
        <title>The DNA sequence, annotation and analysis of human chromosome 3.</title>
        <authorList>
            <person name="Muzny D.M."/>
            <person name="Scherer S.E."/>
            <person name="Kaul R."/>
            <person name="Wang J."/>
            <person name="Yu J."/>
            <person name="Sudbrak R."/>
            <person name="Buhay C.J."/>
            <person name="Chen R."/>
            <person name="Cree A."/>
            <person name="Ding Y."/>
            <person name="Dugan-Rocha S."/>
            <person name="Gill R."/>
            <person name="Gunaratne P."/>
            <person name="Harris R.A."/>
            <person name="Hawes A.C."/>
            <person name="Hernandez J."/>
            <person name="Hodgson A.V."/>
            <person name="Hume J."/>
            <person name="Jackson A."/>
            <person name="Khan Z.M."/>
            <person name="Kovar-Smith C."/>
            <person name="Lewis L.R."/>
            <person name="Lozado R.J."/>
            <person name="Metzker M.L."/>
            <person name="Milosavljevic A."/>
            <person name="Miner G.R."/>
            <person name="Morgan M.B."/>
            <person name="Nazareth L.V."/>
            <person name="Scott G."/>
            <person name="Sodergren E."/>
            <person name="Song X.-Z."/>
            <person name="Steffen D."/>
            <person name="Wei S."/>
            <person name="Wheeler D.A."/>
            <person name="Wright M.W."/>
            <person name="Worley K.C."/>
            <person name="Yuan Y."/>
            <person name="Zhang Z."/>
            <person name="Adams C.Q."/>
            <person name="Ansari-Lari M.A."/>
            <person name="Ayele M."/>
            <person name="Brown M.J."/>
            <person name="Chen G."/>
            <person name="Chen Z."/>
            <person name="Clendenning J."/>
            <person name="Clerc-Blankenburg K.P."/>
            <person name="Chen R."/>
            <person name="Chen Z."/>
            <person name="Davis C."/>
            <person name="Delgado O."/>
            <person name="Dinh H.H."/>
            <person name="Dong W."/>
            <person name="Draper H."/>
            <person name="Ernst S."/>
            <person name="Fu G."/>
            <person name="Gonzalez-Garay M.L."/>
            <person name="Garcia D.K."/>
            <person name="Gillett W."/>
            <person name="Gu J."/>
            <person name="Hao B."/>
            <person name="Haugen E."/>
            <person name="Havlak P."/>
            <person name="He X."/>
            <person name="Hennig S."/>
            <person name="Hu S."/>
            <person name="Huang W."/>
            <person name="Jackson L.R."/>
            <person name="Jacob L.S."/>
            <person name="Kelly S.H."/>
            <person name="Kube M."/>
            <person name="Levy R."/>
            <person name="Li Z."/>
            <person name="Liu B."/>
            <person name="Liu J."/>
            <person name="Liu W."/>
            <person name="Lu J."/>
            <person name="Maheshwari M."/>
            <person name="Nguyen B.-V."/>
            <person name="Okwuonu G.O."/>
            <person name="Palmeiri A."/>
            <person name="Pasternak S."/>
            <person name="Perez L.M."/>
            <person name="Phelps K.A."/>
            <person name="Plopper F.J."/>
            <person name="Qiang B."/>
            <person name="Raymond C."/>
            <person name="Rodriguez R."/>
            <person name="Saenphimmachak C."/>
            <person name="Santibanez J."/>
            <person name="Shen H."/>
            <person name="Shen Y."/>
            <person name="Subramanian S."/>
            <person name="Tabor P.E."/>
            <person name="Verduzco D."/>
            <person name="Waldron L."/>
            <person name="Wang J."/>
            <person name="Wang J."/>
            <person name="Wang Q."/>
            <person name="Williams G.A."/>
            <person name="Wong G.K.-S."/>
            <person name="Yao Z."/>
            <person name="Zhang J."/>
            <person name="Zhang X."/>
            <person name="Zhao G."/>
            <person name="Zhou J."/>
            <person name="Zhou Y."/>
            <person name="Nelson D."/>
            <person name="Lehrach H."/>
            <person name="Reinhardt R."/>
            <person name="Naylor S.L."/>
            <person name="Yang H."/>
            <person name="Olson M."/>
            <person name="Weinstock G."/>
            <person name="Gibbs R.A."/>
        </authorList>
    </citation>
    <scope>NUCLEOTIDE SEQUENCE [LARGE SCALE GENOMIC DNA]</scope>
</reference>
<reference key="3">
    <citation type="journal article" date="2004" name="Genome Res.">
        <title>The status, quality, and expansion of the NIH full-length cDNA project: the Mammalian Gene Collection (MGC).</title>
        <authorList>
            <consortium name="The MGC Project Team"/>
        </authorList>
    </citation>
    <scope>PARTIAL NUCLEOTIDE SEQUENCE [LARGE SCALE MRNA] (ISOFORM 3)</scope>
</reference>
<dbReference type="EMBL" id="AK127779">
    <property type="protein sequence ID" value="BAC87129.1"/>
    <property type="molecule type" value="mRNA"/>
</dbReference>
<dbReference type="EMBL" id="AK128676">
    <property type="protein sequence ID" value="BAC87565.1"/>
    <property type="molecule type" value="mRNA"/>
</dbReference>
<dbReference type="EMBL" id="AK131235">
    <property type="protein sequence ID" value="BAD18417.1"/>
    <property type="molecule type" value="mRNA"/>
</dbReference>
<dbReference type="EMBL" id="AC092043">
    <property type="status" value="NOT_ANNOTATED_CDS"/>
    <property type="molecule type" value="Genomic_DNA"/>
</dbReference>
<dbReference type="EMBL" id="BC128085">
    <property type="protein sequence ID" value="AAI28086.1"/>
    <property type="status" value="ALT_INIT"/>
    <property type="molecule type" value="mRNA"/>
</dbReference>
<dbReference type="CCDS" id="CCDS2708.1">
    <molecule id="Q6ZS27-1"/>
</dbReference>
<dbReference type="CCDS" id="CCDS46807.1">
    <molecule id="Q6ZS27-3"/>
</dbReference>
<dbReference type="RefSeq" id="NP_001128128.1">
    <molecule id="Q6ZS27-3"/>
    <property type="nucleotide sequence ID" value="NM_001134656.2"/>
</dbReference>
<dbReference type="RefSeq" id="NP_997287.2">
    <molecule id="Q6ZS27-1"/>
    <property type="nucleotide sequence ID" value="NM_207404.3"/>
</dbReference>
<dbReference type="SMR" id="Q6ZS27"/>
<dbReference type="BioGRID" id="132979">
    <property type="interactions" value="8"/>
</dbReference>
<dbReference type="FunCoup" id="Q6ZS27">
    <property type="interactions" value="3"/>
</dbReference>
<dbReference type="IntAct" id="Q6ZS27">
    <property type="interactions" value="9"/>
</dbReference>
<dbReference type="STRING" id="9606.ENSP00000329264"/>
<dbReference type="GlyGen" id="Q6ZS27">
    <property type="glycosylation" value="1 site, 1 O-linked glycan (1 site)"/>
</dbReference>
<dbReference type="iPTMnet" id="Q6ZS27"/>
<dbReference type="PhosphoSitePlus" id="Q6ZS27"/>
<dbReference type="BioMuta" id="ZNF662"/>
<dbReference type="DMDM" id="74758793"/>
<dbReference type="jPOST" id="Q6ZS27"/>
<dbReference type="MassIVE" id="Q6ZS27"/>
<dbReference type="PeptideAtlas" id="Q6ZS27"/>
<dbReference type="ProteomicsDB" id="30001"/>
<dbReference type="ProteomicsDB" id="68185">
    <molecule id="Q6ZS27-1"/>
</dbReference>
<dbReference type="ProteomicsDB" id="68186">
    <molecule id="Q6ZS27-2"/>
</dbReference>
<dbReference type="TopDownProteomics" id="Q6ZS27-1">
    <molecule id="Q6ZS27-1"/>
</dbReference>
<dbReference type="Antibodypedia" id="45656">
    <property type="antibodies" value="105 antibodies from 13 providers"/>
</dbReference>
<dbReference type="DNASU" id="389114"/>
<dbReference type="Ensembl" id="ENST00000328199.6">
    <molecule id="Q6ZS27-3"/>
    <property type="protein sequence ID" value="ENSP00000329264.6"/>
    <property type="gene ID" value="ENSG00000182983.15"/>
</dbReference>
<dbReference type="Ensembl" id="ENST00000440367.7">
    <molecule id="Q6ZS27-1"/>
    <property type="protein sequence ID" value="ENSP00000405047.2"/>
    <property type="gene ID" value="ENSG00000182983.15"/>
</dbReference>
<dbReference type="GeneID" id="389114"/>
<dbReference type="KEGG" id="hsa:389114"/>
<dbReference type="MANE-Select" id="ENST00000440367.7">
    <property type="protein sequence ID" value="ENSP00000405047.2"/>
    <property type="RefSeq nucleotide sequence ID" value="NM_207404.4"/>
    <property type="RefSeq protein sequence ID" value="NP_997287.2"/>
</dbReference>
<dbReference type="UCSC" id="uc003cmi.3">
    <molecule id="Q6ZS27-1"/>
    <property type="organism name" value="human"/>
</dbReference>
<dbReference type="AGR" id="HGNC:31930"/>
<dbReference type="CTD" id="389114"/>
<dbReference type="GeneCards" id="ZNF662"/>
<dbReference type="HGNC" id="HGNC:31930">
    <property type="gene designation" value="ZNF662"/>
</dbReference>
<dbReference type="HPA" id="ENSG00000182983">
    <property type="expression patterns" value="Low tissue specificity"/>
</dbReference>
<dbReference type="neXtProt" id="NX_Q6ZS27"/>
<dbReference type="OpenTargets" id="ENSG00000182983"/>
<dbReference type="PharmGKB" id="PA142670510"/>
<dbReference type="VEuPathDB" id="HostDB:ENSG00000182983"/>
<dbReference type="GeneTree" id="ENSGT00940000163753"/>
<dbReference type="HOGENOM" id="CLU_002678_0_0_1"/>
<dbReference type="InParanoid" id="Q6ZS27"/>
<dbReference type="OMA" id="DLAQHQW"/>
<dbReference type="OrthoDB" id="654211at2759"/>
<dbReference type="PAN-GO" id="Q6ZS27">
    <property type="GO annotations" value="3 GO annotations based on evolutionary models"/>
</dbReference>
<dbReference type="PhylomeDB" id="Q6ZS27"/>
<dbReference type="TreeFam" id="TF342076"/>
<dbReference type="PathwayCommons" id="Q6ZS27"/>
<dbReference type="Reactome" id="R-HSA-212436">
    <property type="pathway name" value="Generic Transcription Pathway"/>
</dbReference>
<dbReference type="SignaLink" id="Q6ZS27"/>
<dbReference type="BioGRID-ORCS" id="389114">
    <property type="hits" value="14 hits in 1179 CRISPR screens"/>
</dbReference>
<dbReference type="GenomeRNAi" id="389114"/>
<dbReference type="Pharos" id="Q6ZS27">
    <property type="development level" value="Tdark"/>
</dbReference>
<dbReference type="PRO" id="PR:Q6ZS27"/>
<dbReference type="Proteomes" id="UP000005640">
    <property type="component" value="Chromosome 3"/>
</dbReference>
<dbReference type="RNAct" id="Q6ZS27">
    <property type="molecule type" value="protein"/>
</dbReference>
<dbReference type="Bgee" id="ENSG00000182983">
    <property type="expression patterns" value="Expressed in oviduct epithelium and 136 other cell types or tissues"/>
</dbReference>
<dbReference type="ExpressionAtlas" id="Q6ZS27">
    <property type="expression patterns" value="baseline and differential"/>
</dbReference>
<dbReference type="GO" id="GO:0005634">
    <property type="term" value="C:nucleus"/>
    <property type="evidence" value="ECO:0007669"/>
    <property type="project" value="UniProtKB-SubCell"/>
</dbReference>
<dbReference type="GO" id="GO:0003700">
    <property type="term" value="F:DNA-binding transcription factor activity"/>
    <property type="evidence" value="ECO:0000318"/>
    <property type="project" value="GO_Central"/>
</dbReference>
<dbReference type="GO" id="GO:0000978">
    <property type="term" value="F:RNA polymerase II cis-regulatory region sequence-specific DNA binding"/>
    <property type="evidence" value="ECO:0000318"/>
    <property type="project" value="GO_Central"/>
</dbReference>
<dbReference type="GO" id="GO:0008270">
    <property type="term" value="F:zinc ion binding"/>
    <property type="evidence" value="ECO:0007669"/>
    <property type="project" value="UniProtKB-KW"/>
</dbReference>
<dbReference type="GO" id="GO:0006357">
    <property type="term" value="P:regulation of transcription by RNA polymerase II"/>
    <property type="evidence" value="ECO:0000318"/>
    <property type="project" value="GO_Central"/>
</dbReference>
<dbReference type="FunFam" id="3.30.160.60:FF:000295">
    <property type="entry name" value="zinc finger protein 19"/>
    <property type="match status" value="1"/>
</dbReference>
<dbReference type="FunFam" id="3.30.160.60:FF:000206">
    <property type="entry name" value="zinc finger protein 202 isoform X1"/>
    <property type="match status" value="1"/>
</dbReference>
<dbReference type="FunFam" id="3.30.160.60:FF:000128">
    <property type="entry name" value="zinc finger protein 268 isoform X1"/>
    <property type="match status" value="1"/>
</dbReference>
<dbReference type="FunFam" id="3.30.160.60:FF:000737">
    <property type="entry name" value="Zinc finger protein 565"/>
    <property type="match status" value="1"/>
</dbReference>
<dbReference type="FunFam" id="3.30.160.60:FF:001270">
    <property type="entry name" value="zinc finger protein 583 isoform X1"/>
    <property type="match status" value="1"/>
</dbReference>
<dbReference type="FunFam" id="3.30.160.60:FF:001266">
    <property type="entry name" value="Zinc finger protein 662"/>
    <property type="match status" value="1"/>
</dbReference>
<dbReference type="FunFam" id="3.30.160.60:FF:002380">
    <property type="entry name" value="Zinc finger protein 662"/>
    <property type="match status" value="1"/>
</dbReference>
<dbReference type="FunFam" id="3.30.160.60:FF:003093">
    <property type="entry name" value="Zinc finger protein 662"/>
    <property type="match status" value="1"/>
</dbReference>
<dbReference type="Gene3D" id="3.30.160.60">
    <property type="entry name" value="Classic Zinc Finger"/>
    <property type="match status" value="8"/>
</dbReference>
<dbReference type="InterPro" id="IPR001909">
    <property type="entry name" value="KRAB"/>
</dbReference>
<dbReference type="InterPro" id="IPR036236">
    <property type="entry name" value="Znf_C2H2_sf"/>
</dbReference>
<dbReference type="InterPro" id="IPR013087">
    <property type="entry name" value="Znf_C2H2_type"/>
</dbReference>
<dbReference type="PANTHER" id="PTHR24393">
    <property type="entry name" value="ZINC FINGER PROTEIN"/>
    <property type="match status" value="1"/>
</dbReference>
<dbReference type="PANTHER" id="PTHR24393:SF159">
    <property type="entry name" value="ZINC FINGER PROTEIN 345-RELATED"/>
    <property type="match status" value="1"/>
</dbReference>
<dbReference type="Pfam" id="PF00096">
    <property type="entry name" value="zf-C2H2"/>
    <property type="match status" value="8"/>
</dbReference>
<dbReference type="SMART" id="SM00355">
    <property type="entry name" value="ZnF_C2H2"/>
    <property type="match status" value="8"/>
</dbReference>
<dbReference type="SUPFAM" id="SSF57667">
    <property type="entry name" value="beta-beta-alpha zinc fingers"/>
    <property type="match status" value="5"/>
</dbReference>
<dbReference type="PROSITE" id="PS50805">
    <property type="entry name" value="KRAB"/>
    <property type="match status" value="1"/>
</dbReference>
<dbReference type="PROSITE" id="PS00028">
    <property type="entry name" value="ZINC_FINGER_C2H2_1"/>
    <property type="match status" value="8"/>
</dbReference>
<dbReference type="PROSITE" id="PS50157">
    <property type="entry name" value="ZINC_FINGER_C2H2_2"/>
    <property type="match status" value="8"/>
</dbReference>
<gene>
    <name type="primary">ZNF662</name>
</gene>
<protein>
    <recommendedName>
        <fullName>Zinc finger protein 662</fullName>
    </recommendedName>
</protein>
<name>ZN662_HUMAN</name>
<proteinExistence type="evidence at protein level"/>
<accession>Q6ZS27</accession>
<accession>A1A4T9</accession>
<accession>F8W7S8</accession>
<accession>Q6ZNF8</accession>
<accession>Q6ZQW8</accession>
<sequence length="426" mass="48496">MLENYGAVASLAAFPFPKPALISQLERGETPWCSVPRGALDGEAPRGISSGYPFLKPAGISHPEQVEEPLNLKLQGEGPSLICPEGVLKRKKEDFILKEEIIEEAQDLMVLSSGPQWCGSQELWFGKTCEEKSRLGRWPGYLNGGRMESSTNDIIEVIVKDEMISVEESSGNTDVNNLLGIHHKILNEQIFYICEECGKCFDQNEDFDQHQKTHNGEKVYGCKECGKAFSFRSHCIAHQRIHSGVKPYECQECAKAFVWKSNLIRHQRIHTGEKPFECKECGKGFSQNTSLTQHQRIHTGEKPYTCKECGKSFTRNPALLRHQRMHTGEKPYECKDCGKGFMWNSDLSQHQRVHTGDKPHECTDCGKSFFCKAHLIRHQRIHTGERPYKCNDCGKAFSQNSVLIKHQRRHARDKPYNCQISHLLEH</sequence>